<name>RS28_ICTPU</name>
<feature type="chain" id="PRO_0000136827" description="Small ribosomal subunit protein eS28">
    <location>
        <begin position="1"/>
        <end position="69"/>
    </location>
</feature>
<feature type="modified residue" description="N-acetylmethionine" evidence="2">
    <location>
        <position position="1"/>
    </location>
</feature>
<dbReference type="EMBL" id="AF402839">
    <property type="protein sequence ID" value="AAK95213.1"/>
    <property type="molecule type" value="mRNA"/>
</dbReference>
<dbReference type="RefSeq" id="NP_001187089.1">
    <property type="nucleotide sequence ID" value="NM_001200160.1"/>
</dbReference>
<dbReference type="SMR" id="Q90YP3"/>
<dbReference type="STRING" id="7998.ENSIPUP00000012895"/>
<dbReference type="GeneID" id="100304578"/>
<dbReference type="KEGG" id="ipu:100304578"/>
<dbReference type="CTD" id="6234"/>
<dbReference type="OrthoDB" id="10258930at2759"/>
<dbReference type="Proteomes" id="UP000221080">
    <property type="component" value="Chromosome 20"/>
</dbReference>
<dbReference type="GO" id="GO:0098556">
    <property type="term" value="C:cytoplasmic side of rough endoplasmic reticulum membrane"/>
    <property type="evidence" value="ECO:0000250"/>
    <property type="project" value="UniProtKB"/>
</dbReference>
<dbReference type="GO" id="GO:0022627">
    <property type="term" value="C:cytosolic small ribosomal subunit"/>
    <property type="evidence" value="ECO:0000250"/>
    <property type="project" value="UniProtKB"/>
</dbReference>
<dbReference type="GO" id="GO:0005840">
    <property type="term" value="C:ribosome"/>
    <property type="evidence" value="ECO:0000250"/>
    <property type="project" value="UniProtKB"/>
</dbReference>
<dbReference type="GO" id="GO:0003735">
    <property type="term" value="F:structural constituent of ribosome"/>
    <property type="evidence" value="ECO:0007669"/>
    <property type="project" value="InterPro"/>
</dbReference>
<dbReference type="GO" id="GO:0002181">
    <property type="term" value="P:cytoplasmic translation"/>
    <property type="evidence" value="ECO:0000250"/>
    <property type="project" value="UniProtKB"/>
</dbReference>
<dbReference type="GO" id="GO:0030490">
    <property type="term" value="P:maturation of SSU-rRNA"/>
    <property type="evidence" value="ECO:0007669"/>
    <property type="project" value="TreeGrafter"/>
</dbReference>
<dbReference type="GO" id="GO:0000028">
    <property type="term" value="P:ribosomal small subunit assembly"/>
    <property type="evidence" value="ECO:0007669"/>
    <property type="project" value="TreeGrafter"/>
</dbReference>
<dbReference type="CDD" id="cd04457">
    <property type="entry name" value="S1_S28E"/>
    <property type="match status" value="1"/>
</dbReference>
<dbReference type="FunFam" id="2.40.50.140:FF:000025">
    <property type="entry name" value="40S ribosomal protein S28"/>
    <property type="match status" value="1"/>
</dbReference>
<dbReference type="Gene3D" id="2.40.50.140">
    <property type="entry name" value="Nucleic acid-binding proteins"/>
    <property type="match status" value="1"/>
</dbReference>
<dbReference type="HAMAP" id="MF_00292">
    <property type="entry name" value="Ribosomal_eS28"/>
    <property type="match status" value="1"/>
</dbReference>
<dbReference type="InterPro" id="IPR012340">
    <property type="entry name" value="NA-bd_OB-fold"/>
</dbReference>
<dbReference type="InterPro" id="IPR000289">
    <property type="entry name" value="Ribosomal_eS28"/>
</dbReference>
<dbReference type="InterPro" id="IPR028626">
    <property type="entry name" value="Ribosomal_eS28_CS"/>
</dbReference>
<dbReference type="PANTHER" id="PTHR10769">
    <property type="entry name" value="40S RIBOSOMAL PROTEIN S28"/>
    <property type="match status" value="1"/>
</dbReference>
<dbReference type="PANTHER" id="PTHR10769:SF3">
    <property type="entry name" value="SMALL RIBOSOMAL SUBUNIT PROTEIN ES28"/>
    <property type="match status" value="1"/>
</dbReference>
<dbReference type="Pfam" id="PF01200">
    <property type="entry name" value="Ribosomal_S28e"/>
    <property type="match status" value="1"/>
</dbReference>
<dbReference type="SUPFAM" id="SSF50249">
    <property type="entry name" value="Nucleic acid-binding proteins"/>
    <property type="match status" value="1"/>
</dbReference>
<dbReference type="PROSITE" id="PS00961">
    <property type="entry name" value="RIBOSOMAL_S28E"/>
    <property type="match status" value="1"/>
</dbReference>
<sequence length="69" mass="7824">MDASRVQPIKLARVTKVLGRTGSQGQCTQVRVEFMDDSNRSIIRNVKGPVREGDVLTLLESEREARRLR</sequence>
<protein>
    <recommendedName>
        <fullName evidence="4">Small ribosomal subunit protein eS28</fullName>
    </recommendedName>
    <alternativeName>
        <fullName>40S ribosomal protein S28</fullName>
    </alternativeName>
</protein>
<comment type="function">
    <text evidence="1">Component of the small ribosomal subunit. The ribosome is a large ribonucleoprotein complex responsible for the synthesis of proteins in the cell.</text>
</comment>
<comment type="subunit">
    <text evidence="3">Component of the 40S small ribosomal subunit.</text>
</comment>
<comment type="subcellular location">
    <subcellularLocation>
        <location evidence="1">Cytoplasm</location>
        <location evidence="1">Cytosol</location>
    </subcellularLocation>
    <subcellularLocation>
        <location evidence="1">Cytoplasm</location>
    </subcellularLocation>
    <subcellularLocation>
        <location evidence="3">Rough endoplasmic reticulum</location>
    </subcellularLocation>
    <text evidence="1 3">Detected on cytosolic polysomes (By similarity). Detected in ribosomes that are associated with the rough endoplasmic reticulum (By similarity).</text>
</comment>
<comment type="similarity">
    <text evidence="4">Belongs to the eukaryotic ribosomal protein eS28 family.</text>
</comment>
<gene>
    <name type="primary">rps28</name>
</gene>
<proteinExistence type="inferred from homology"/>
<keyword id="KW-0007">Acetylation</keyword>
<keyword id="KW-0963">Cytoplasm</keyword>
<keyword id="KW-0256">Endoplasmic reticulum</keyword>
<keyword id="KW-0687">Ribonucleoprotein</keyword>
<keyword id="KW-0689">Ribosomal protein</keyword>
<accession>Q90YP3</accession>
<reference key="1">
    <citation type="journal article" date="2002" name="Gene">
        <title>Translational machinery of channel catfish: I. A transcriptomic approach to the analysis of 32 40S ribosomal protein genes and their expression.</title>
        <authorList>
            <person name="Karsi A."/>
            <person name="Patterson A."/>
            <person name="Feng J."/>
            <person name="Liu Z.-J."/>
        </authorList>
    </citation>
    <scope>NUCLEOTIDE SEQUENCE [MRNA]</scope>
</reference>
<evidence type="ECO:0000250" key="1">
    <source>
        <dbReference type="UniProtKB" id="P62857"/>
    </source>
</evidence>
<evidence type="ECO:0000250" key="2">
    <source>
        <dbReference type="UniProtKB" id="P62859"/>
    </source>
</evidence>
<evidence type="ECO:0000250" key="3">
    <source>
        <dbReference type="UniProtKB" id="Q6QAT1"/>
    </source>
</evidence>
<evidence type="ECO:0000305" key="4"/>
<organism>
    <name type="scientific">Ictalurus punctatus</name>
    <name type="common">Channel catfish</name>
    <name type="synonym">Silurus punctatus</name>
    <dbReference type="NCBI Taxonomy" id="7998"/>
    <lineage>
        <taxon>Eukaryota</taxon>
        <taxon>Metazoa</taxon>
        <taxon>Chordata</taxon>
        <taxon>Craniata</taxon>
        <taxon>Vertebrata</taxon>
        <taxon>Euteleostomi</taxon>
        <taxon>Actinopterygii</taxon>
        <taxon>Neopterygii</taxon>
        <taxon>Teleostei</taxon>
        <taxon>Ostariophysi</taxon>
        <taxon>Siluriformes</taxon>
        <taxon>Ictaluridae</taxon>
        <taxon>Ictalurus</taxon>
    </lineage>
</organism>